<protein>
    <recommendedName>
        <fullName evidence="1">ATP synthase subunit a</fullName>
    </recommendedName>
    <alternativeName>
        <fullName evidence="1">ATP synthase F0 sector subunit a</fullName>
    </alternativeName>
    <alternativeName>
        <fullName evidence="1">F-ATPase subunit 6</fullName>
    </alternativeName>
</protein>
<accession>A1SBU6</accession>
<gene>
    <name evidence="1" type="primary">atpB</name>
    <name type="ordered locus">Sama_3650</name>
</gene>
<reference key="1">
    <citation type="submission" date="2006-12" db="EMBL/GenBank/DDBJ databases">
        <title>Complete sequence of Shewanella amazonensis SB2B.</title>
        <authorList>
            <consortium name="US DOE Joint Genome Institute"/>
            <person name="Copeland A."/>
            <person name="Lucas S."/>
            <person name="Lapidus A."/>
            <person name="Barry K."/>
            <person name="Detter J.C."/>
            <person name="Glavina del Rio T."/>
            <person name="Hammon N."/>
            <person name="Israni S."/>
            <person name="Dalin E."/>
            <person name="Tice H."/>
            <person name="Pitluck S."/>
            <person name="Munk A.C."/>
            <person name="Brettin T."/>
            <person name="Bruce D."/>
            <person name="Han C."/>
            <person name="Tapia R."/>
            <person name="Gilna P."/>
            <person name="Schmutz J."/>
            <person name="Larimer F."/>
            <person name="Land M."/>
            <person name="Hauser L."/>
            <person name="Kyrpides N."/>
            <person name="Mikhailova N."/>
            <person name="Fredrickson J."/>
            <person name="Richardson P."/>
        </authorList>
    </citation>
    <scope>NUCLEOTIDE SEQUENCE [LARGE SCALE GENOMIC DNA]</scope>
    <source>
        <strain>ATCC BAA-1098 / SB2B</strain>
    </source>
</reference>
<sequence length="264" mass="29518">MAATGEALTPQGYIQHHLTNLSVGEGFWTWHIDSLLFSVGLGVLFLWIFRSVGKKATTGVPGKLQCFVEMIVEFVDNSVKETFHGRNALIAPLALTIFVWVFMMNFMDMVPVDWLPHTAAMLGVPYLKVVPTTDLNITFSLALGVFLLIIYYSIKVKGVSGFVKELTLQPFNHWAMIPVNLLLESVTLIAKPISLALRLFGNLYAGELIFILIALMYGANWLIASLGVTLQLGWLIFHILVITLQAFIFMMLTIVYLSMAHEDH</sequence>
<comment type="function">
    <text evidence="1">Key component of the proton channel; it plays a direct role in the translocation of protons across the membrane.</text>
</comment>
<comment type="subunit">
    <text evidence="1">F-type ATPases have 2 components, CF(1) - the catalytic core - and CF(0) - the membrane proton channel. CF(1) has five subunits: alpha(3), beta(3), gamma(1), delta(1), epsilon(1). CF(0) has three main subunits: a(1), b(2) and c(9-12). The alpha and beta chains form an alternating ring which encloses part of the gamma chain. CF(1) is attached to CF(0) by a central stalk formed by the gamma and epsilon chains, while a peripheral stalk is formed by the delta and b chains.</text>
</comment>
<comment type="subcellular location">
    <subcellularLocation>
        <location evidence="1">Cell inner membrane</location>
        <topology evidence="1">Multi-pass membrane protein</topology>
    </subcellularLocation>
</comment>
<comment type="similarity">
    <text evidence="1">Belongs to the ATPase A chain family.</text>
</comment>
<name>ATP6_SHEAM</name>
<proteinExistence type="inferred from homology"/>
<organism>
    <name type="scientific">Shewanella amazonensis (strain ATCC BAA-1098 / SB2B)</name>
    <dbReference type="NCBI Taxonomy" id="326297"/>
    <lineage>
        <taxon>Bacteria</taxon>
        <taxon>Pseudomonadati</taxon>
        <taxon>Pseudomonadota</taxon>
        <taxon>Gammaproteobacteria</taxon>
        <taxon>Alteromonadales</taxon>
        <taxon>Shewanellaceae</taxon>
        <taxon>Shewanella</taxon>
    </lineage>
</organism>
<feature type="chain" id="PRO_0000362447" description="ATP synthase subunit a">
    <location>
        <begin position="1"/>
        <end position="264"/>
    </location>
</feature>
<feature type="transmembrane region" description="Helical" evidence="1">
    <location>
        <begin position="29"/>
        <end position="49"/>
    </location>
</feature>
<feature type="transmembrane region" description="Helical" evidence="1">
    <location>
        <begin position="87"/>
        <end position="107"/>
    </location>
</feature>
<feature type="transmembrane region" description="Helical" evidence="1">
    <location>
        <begin position="134"/>
        <end position="154"/>
    </location>
</feature>
<feature type="transmembrane region" description="Helical" evidence="1">
    <location>
        <begin position="177"/>
        <end position="197"/>
    </location>
</feature>
<feature type="transmembrane region" description="Helical" evidence="1">
    <location>
        <begin position="208"/>
        <end position="228"/>
    </location>
</feature>
<feature type="transmembrane region" description="Helical" evidence="1">
    <location>
        <begin position="235"/>
        <end position="255"/>
    </location>
</feature>
<dbReference type="EMBL" id="CP000507">
    <property type="protein sequence ID" value="ABM01853.1"/>
    <property type="molecule type" value="Genomic_DNA"/>
</dbReference>
<dbReference type="RefSeq" id="WP_011761756.1">
    <property type="nucleotide sequence ID" value="NC_008700.1"/>
</dbReference>
<dbReference type="SMR" id="A1SBU6"/>
<dbReference type="STRING" id="326297.Sama_3650"/>
<dbReference type="KEGG" id="saz:Sama_3650"/>
<dbReference type="eggNOG" id="COG0356">
    <property type="taxonomic scope" value="Bacteria"/>
</dbReference>
<dbReference type="HOGENOM" id="CLU_041018_1_0_6"/>
<dbReference type="OrthoDB" id="9789241at2"/>
<dbReference type="Proteomes" id="UP000009175">
    <property type="component" value="Chromosome"/>
</dbReference>
<dbReference type="GO" id="GO:0005886">
    <property type="term" value="C:plasma membrane"/>
    <property type="evidence" value="ECO:0007669"/>
    <property type="project" value="UniProtKB-SubCell"/>
</dbReference>
<dbReference type="GO" id="GO:0045259">
    <property type="term" value="C:proton-transporting ATP synthase complex"/>
    <property type="evidence" value="ECO:0007669"/>
    <property type="project" value="UniProtKB-KW"/>
</dbReference>
<dbReference type="GO" id="GO:0046933">
    <property type="term" value="F:proton-transporting ATP synthase activity, rotational mechanism"/>
    <property type="evidence" value="ECO:0007669"/>
    <property type="project" value="UniProtKB-UniRule"/>
</dbReference>
<dbReference type="GO" id="GO:0042777">
    <property type="term" value="P:proton motive force-driven plasma membrane ATP synthesis"/>
    <property type="evidence" value="ECO:0007669"/>
    <property type="project" value="TreeGrafter"/>
</dbReference>
<dbReference type="CDD" id="cd00310">
    <property type="entry name" value="ATP-synt_Fo_a_6"/>
    <property type="match status" value="1"/>
</dbReference>
<dbReference type="FunFam" id="1.20.120.220:FF:000002">
    <property type="entry name" value="ATP synthase subunit a"/>
    <property type="match status" value="1"/>
</dbReference>
<dbReference type="Gene3D" id="1.20.120.220">
    <property type="entry name" value="ATP synthase, F0 complex, subunit A"/>
    <property type="match status" value="1"/>
</dbReference>
<dbReference type="HAMAP" id="MF_01393">
    <property type="entry name" value="ATP_synth_a_bact"/>
    <property type="match status" value="1"/>
</dbReference>
<dbReference type="InterPro" id="IPR045082">
    <property type="entry name" value="ATP_syn_F0_a_bact/chloroplast"/>
</dbReference>
<dbReference type="InterPro" id="IPR000568">
    <property type="entry name" value="ATP_synth_F0_asu"/>
</dbReference>
<dbReference type="InterPro" id="IPR023011">
    <property type="entry name" value="ATP_synth_F0_asu_AS"/>
</dbReference>
<dbReference type="InterPro" id="IPR035908">
    <property type="entry name" value="F0_ATP_A_sf"/>
</dbReference>
<dbReference type="NCBIfam" id="TIGR01131">
    <property type="entry name" value="ATP_synt_6_or_A"/>
    <property type="match status" value="1"/>
</dbReference>
<dbReference type="NCBIfam" id="NF004477">
    <property type="entry name" value="PRK05815.1-1"/>
    <property type="match status" value="1"/>
</dbReference>
<dbReference type="PANTHER" id="PTHR42823">
    <property type="entry name" value="ATP SYNTHASE SUBUNIT A, CHLOROPLASTIC"/>
    <property type="match status" value="1"/>
</dbReference>
<dbReference type="PANTHER" id="PTHR42823:SF3">
    <property type="entry name" value="ATP SYNTHASE SUBUNIT A, CHLOROPLASTIC"/>
    <property type="match status" value="1"/>
</dbReference>
<dbReference type="Pfam" id="PF00119">
    <property type="entry name" value="ATP-synt_A"/>
    <property type="match status" value="1"/>
</dbReference>
<dbReference type="PRINTS" id="PR00123">
    <property type="entry name" value="ATPASEA"/>
</dbReference>
<dbReference type="SUPFAM" id="SSF81336">
    <property type="entry name" value="F1F0 ATP synthase subunit A"/>
    <property type="match status" value="1"/>
</dbReference>
<dbReference type="PROSITE" id="PS00449">
    <property type="entry name" value="ATPASE_A"/>
    <property type="match status" value="1"/>
</dbReference>
<keyword id="KW-0066">ATP synthesis</keyword>
<keyword id="KW-0997">Cell inner membrane</keyword>
<keyword id="KW-1003">Cell membrane</keyword>
<keyword id="KW-0138">CF(0)</keyword>
<keyword id="KW-0375">Hydrogen ion transport</keyword>
<keyword id="KW-0406">Ion transport</keyword>
<keyword id="KW-0472">Membrane</keyword>
<keyword id="KW-1185">Reference proteome</keyword>
<keyword id="KW-0812">Transmembrane</keyword>
<keyword id="KW-1133">Transmembrane helix</keyword>
<keyword id="KW-0813">Transport</keyword>
<evidence type="ECO:0000255" key="1">
    <source>
        <dbReference type="HAMAP-Rule" id="MF_01393"/>
    </source>
</evidence>